<feature type="chain" id="PRO_0000155498" description="Ribosomal RNA large subunit methyltransferase E">
    <location>
        <begin position="1"/>
        <end position="209"/>
    </location>
</feature>
<feature type="active site" description="Proton acceptor" evidence="1">
    <location>
        <position position="164"/>
    </location>
</feature>
<feature type="binding site" evidence="1">
    <location>
        <position position="63"/>
    </location>
    <ligand>
        <name>S-adenosyl-L-methionine</name>
        <dbReference type="ChEBI" id="CHEBI:59789"/>
    </ligand>
</feature>
<feature type="binding site" evidence="1">
    <location>
        <position position="65"/>
    </location>
    <ligand>
        <name>S-adenosyl-L-methionine</name>
        <dbReference type="ChEBI" id="CHEBI:59789"/>
    </ligand>
</feature>
<feature type="binding site" evidence="1">
    <location>
        <position position="83"/>
    </location>
    <ligand>
        <name>S-adenosyl-L-methionine</name>
        <dbReference type="ChEBI" id="CHEBI:59789"/>
    </ligand>
</feature>
<feature type="binding site" evidence="1">
    <location>
        <position position="99"/>
    </location>
    <ligand>
        <name>S-adenosyl-L-methionine</name>
        <dbReference type="ChEBI" id="CHEBI:59789"/>
    </ligand>
</feature>
<feature type="binding site" evidence="1">
    <location>
        <position position="124"/>
    </location>
    <ligand>
        <name>S-adenosyl-L-methionine</name>
        <dbReference type="ChEBI" id="CHEBI:59789"/>
    </ligand>
</feature>
<sequence length="209" mass="23335">MTGKKRSASSSRWLQEHFSDKYVQQAQKKGLRSRAWFKLDEIQQSDKLFKPGMTVVDLGAAPGGWSQYVVTQIGGKGRIIACDLLPMDPIVGVDFLQGDFRDELVMKALLERVGDSKVQVVMSDMAPNMSGTPAVDIPRAMYLVELALEMCRDVLAPGGSFVVKVFQGEGFDEYLREIRSLFTKVKVRKPDSSRARSREVYIVATGRKP</sequence>
<reference key="1">
    <citation type="journal article" date="2001" name="Nature">
        <title>Genome sequence of enterohaemorrhagic Escherichia coli O157:H7.</title>
        <authorList>
            <person name="Perna N.T."/>
            <person name="Plunkett G. III"/>
            <person name="Burland V."/>
            <person name="Mau B."/>
            <person name="Glasner J.D."/>
            <person name="Rose D.J."/>
            <person name="Mayhew G.F."/>
            <person name="Evans P.S."/>
            <person name="Gregor J."/>
            <person name="Kirkpatrick H.A."/>
            <person name="Posfai G."/>
            <person name="Hackett J."/>
            <person name="Klink S."/>
            <person name="Boutin A."/>
            <person name="Shao Y."/>
            <person name="Miller L."/>
            <person name="Grotbeck E.J."/>
            <person name="Davis N.W."/>
            <person name="Lim A."/>
            <person name="Dimalanta E.T."/>
            <person name="Potamousis K."/>
            <person name="Apodaca J."/>
            <person name="Anantharaman T.S."/>
            <person name="Lin J."/>
            <person name="Yen G."/>
            <person name="Schwartz D.C."/>
            <person name="Welch R.A."/>
            <person name="Blattner F.R."/>
        </authorList>
    </citation>
    <scope>NUCLEOTIDE SEQUENCE [LARGE SCALE GENOMIC DNA]</scope>
    <source>
        <strain>O157:H7 / EDL933 / ATCC 700927 / EHEC</strain>
    </source>
</reference>
<reference key="2">
    <citation type="journal article" date="2001" name="DNA Res.">
        <title>Complete genome sequence of enterohemorrhagic Escherichia coli O157:H7 and genomic comparison with a laboratory strain K-12.</title>
        <authorList>
            <person name="Hayashi T."/>
            <person name="Makino K."/>
            <person name="Ohnishi M."/>
            <person name="Kurokawa K."/>
            <person name="Ishii K."/>
            <person name="Yokoyama K."/>
            <person name="Han C.-G."/>
            <person name="Ohtsubo E."/>
            <person name="Nakayama K."/>
            <person name="Murata T."/>
            <person name="Tanaka M."/>
            <person name="Tobe T."/>
            <person name="Iida T."/>
            <person name="Takami H."/>
            <person name="Honda T."/>
            <person name="Sasakawa C."/>
            <person name="Ogasawara N."/>
            <person name="Yasunaga T."/>
            <person name="Kuhara S."/>
            <person name="Shiba T."/>
            <person name="Hattori M."/>
            <person name="Shinagawa H."/>
        </authorList>
    </citation>
    <scope>NUCLEOTIDE SEQUENCE [LARGE SCALE GENOMIC DNA]</scope>
    <source>
        <strain>O157:H7 / Sakai / RIMD 0509952 / EHEC</strain>
    </source>
</reference>
<evidence type="ECO:0000255" key="1">
    <source>
        <dbReference type="HAMAP-Rule" id="MF_01547"/>
    </source>
</evidence>
<comment type="function">
    <text evidence="1">Specifically methylates the uridine in position 2552 of 23S rRNA at the 2'-O position of the ribose in the fully assembled 50S ribosomal subunit.</text>
</comment>
<comment type="catalytic activity">
    <reaction evidence="1">
        <text>uridine(2552) in 23S rRNA + S-adenosyl-L-methionine = 2'-O-methyluridine(2552) in 23S rRNA + S-adenosyl-L-homocysteine + H(+)</text>
        <dbReference type="Rhea" id="RHEA:42720"/>
        <dbReference type="Rhea" id="RHEA-COMP:10202"/>
        <dbReference type="Rhea" id="RHEA-COMP:10203"/>
        <dbReference type="ChEBI" id="CHEBI:15378"/>
        <dbReference type="ChEBI" id="CHEBI:57856"/>
        <dbReference type="ChEBI" id="CHEBI:59789"/>
        <dbReference type="ChEBI" id="CHEBI:65315"/>
        <dbReference type="ChEBI" id="CHEBI:74478"/>
        <dbReference type="EC" id="2.1.1.166"/>
    </reaction>
</comment>
<comment type="subcellular location">
    <subcellularLocation>
        <location evidence="1">Cytoplasm</location>
    </subcellularLocation>
</comment>
<comment type="similarity">
    <text evidence="1">Belongs to the class I-like SAM-binding methyltransferase superfamily. RNA methyltransferase RlmE family.</text>
</comment>
<accession>P0C0R8</accession>
<accession>P28692</accession>
<keyword id="KW-0963">Cytoplasm</keyword>
<keyword id="KW-0489">Methyltransferase</keyword>
<keyword id="KW-1185">Reference proteome</keyword>
<keyword id="KW-0698">rRNA processing</keyword>
<keyword id="KW-0949">S-adenosyl-L-methionine</keyword>
<keyword id="KW-0808">Transferase</keyword>
<name>RLME_ECO57</name>
<organism>
    <name type="scientific">Escherichia coli O157:H7</name>
    <dbReference type="NCBI Taxonomy" id="83334"/>
    <lineage>
        <taxon>Bacteria</taxon>
        <taxon>Pseudomonadati</taxon>
        <taxon>Pseudomonadota</taxon>
        <taxon>Gammaproteobacteria</taxon>
        <taxon>Enterobacterales</taxon>
        <taxon>Enterobacteriaceae</taxon>
        <taxon>Escherichia</taxon>
    </lineage>
</organism>
<gene>
    <name evidence="1" type="primary">rlmE</name>
    <name evidence="1" type="synonym">ftsJ</name>
    <name evidence="1" type="synonym">rrmJ</name>
    <name type="ordered locus">Z4541</name>
    <name type="ordered locus">ECs4058</name>
</gene>
<dbReference type="EC" id="2.1.1.166" evidence="1"/>
<dbReference type="EMBL" id="AE005174">
    <property type="protein sequence ID" value="AAG58313.1"/>
    <property type="molecule type" value="Genomic_DNA"/>
</dbReference>
<dbReference type="EMBL" id="BA000007">
    <property type="protein sequence ID" value="BAB37481.1"/>
    <property type="molecule type" value="Genomic_DNA"/>
</dbReference>
<dbReference type="PIR" id="B91136">
    <property type="entry name" value="B91136"/>
</dbReference>
<dbReference type="PIR" id="E85981">
    <property type="entry name" value="E85981"/>
</dbReference>
<dbReference type="RefSeq" id="NP_312085.1">
    <property type="nucleotide sequence ID" value="NC_002695.1"/>
</dbReference>
<dbReference type="RefSeq" id="WP_000145975.1">
    <property type="nucleotide sequence ID" value="NZ_VOAI01000014.1"/>
</dbReference>
<dbReference type="SMR" id="P0C0R8"/>
<dbReference type="STRING" id="155864.Z4541"/>
<dbReference type="GeneID" id="916101"/>
<dbReference type="GeneID" id="93778802"/>
<dbReference type="KEGG" id="ece:Z4541"/>
<dbReference type="KEGG" id="ecs:ECs_4058"/>
<dbReference type="PATRIC" id="fig|386585.9.peg.4237"/>
<dbReference type="eggNOG" id="COG0293">
    <property type="taxonomic scope" value="Bacteria"/>
</dbReference>
<dbReference type="HOGENOM" id="CLU_009422_4_0_6"/>
<dbReference type="OMA" id="HRQTDHL"/>
<dbReference type="Proteomes" id="UP000000558">
    <property type="component" value="Chromosome"/>
</dbReference>
<dbReference type="Proteomes" id="UP000002519">
    <property type="component" value="Chromosome"/>
</dbReference>
<dbReference type="GO" id="GO:0005737">
    <property type="term" value="C:cytoplasm"/>
    <property type="evidence" value="ECO:0007669"/>
    <property type="project" value="UniProtKB-SubCell"/>
</dbReference>
<dbReference type="GO" id="GO:0008650">
    <property type="term" value="F:rRNA (uridine-2'-O-)-methyltransferase activity"/>
    <property type="evidence" value="ECO:0007669"/>
    <property type="project" value="UniProtKB-UniRule"/>
</dbReference>
<dbReference type="CDD" id="cd02440">
    <property type="entry name" value="AdoMet_MTases"/>
    <property type="match status" value="1"/>
</dbReference>
<dbReference type="FunFam" id="3.40.50.150:FF:000005">
    <property type="entry name" value="Ribosomal RNA large subunit methyltransferase E"/>
    <property type="match status" value="1"/>
</dbReference>
<dbReference type="Gene3D" id="3.40.50.150">
    <property type="entry name" value="Vaccinia Virus protein VP39"/>
    <property type="match status" value="1"/>
</dbReference>
<dbReference type="HAMAP" id="MF_01547">
    <property type="entry name" value="RNA_methyltr_E"/>
    <property type="match status" value="1"/>
</dbReference>
<dbReference type="InterPro" id="IPR050082">
    <property type="entry name" value="RNA_methyltr_RlmE"/>
</dbReference>
<dbReference type="InterPro" id="IPR002877">
    <property type="entry name" value="RNA_MeTrfase_FtsJ_dom"/>
</dbReference>
<dbReference type="InterPro" id="IPR015507">
    <property type="entry name" value="rRNA-MeTfrase_E"/>
</dbReference>
<dbReference type="InterPro" id="IPR004512">
    <property type="entry name" value="rRNA_MeTrfase_gammaproteobac"/>
</dbReference>
<dbReference type="InterPro" id="IPR029063">
    <property type="entry name" value="SAM-dependent_MTases_sf"/>
</dbReference>
<dbReference type="NCBIfam" id="NF008390">
    <property type="entry name" value="PRK11188.1"/>
    <property type="match status" value="1"/>
</dbReference>
<dbReference type="NCBIfam" id="TIGR00438">
    <property type="entry name" value="rrmJ"/>
    <property type="match status" value="1"/>
</dbReference>
<dbReference type="PANTHER" id="PTHR10920">
    <property type="entry name" value="RIBOSOMAL RNA METHYLTRANSFERASE"/>
    <property type="match status" value="1"/>
</dbReference>
<dbReference type="PANTHER" id="PTHR10920:SF18">
    <property type="entry name" value="RRNA METHYLTRANSFERASE 2, MITOCHONDRIAL"/>
    <property type="match status" value="1"/>
</dbReference>
<dbReference type="Pfam" id="PF01728">
    <property type="entry name" value="FtsJ"/>
    <property type="match status" value="1"/>
</dbReference>
<dbReference type="PIRSF" id="PIRSF005461">
    <property type="entry name" value="23S_rRNA_mtase"/>
    <property type="match status" value="1"/>
</dbReference>
<dbReference type="SUPFAM" id="SSF53335">
    <property type="entry name" value="S-adenosyl-L-methionine-dependent methyltransferases"/>
    <property type="match status" value="1"/>
</dbReference>
<proteinExistence type="inferred from homology"/>
<protein>
    <recommendedName>
        <fullName evidence="1">Ribosomal RNA large subunit methyltransferase E</fullName>
        <ecNumber evidence="1">2.1.1.166</ecNumber>
    </recommendedName>
    <alternativeName>
        <fullName evidence="1">23S rRNA Um2552 methyltransferase</fullName>
    </alternativeName>
    <alternativeName>
        <fullName evidence="1">rRNA (uridine-2'-O-)-methyltransferase</fullName>
    </alternativeName>
</protein>